<proteinExistence type="evidence at protein level"/>
<name>CABP1_MOUSE</name>
<dbReference type="EMBL" id="AF169152">
    <property type="protein sequence ID" value="AAF25786.1"/>
    <property type="molecule type" value="mRNA"/>
</dbReference>
<dbReference type="EMBL" id="AF169153">
    <property type="protein sequence ID" value="AAF25787.1"/>
    <property type="molecule type" value="mRNA"/>
</dbReference>
<dbReference type="CCDS" id="CCDS19582.1">
    <molecule id="Q9JLK7-1"/>
</dbReference>
<dbReference type="CCDS" id="CCDS80378.1">
    <molecule id="Q9JLK7-2"/>
</dbReference>
<dbReference type="RefSeq" id="NP_001297644.1">
    <molecule id="Q9JLK7-2"/>
    <property type="nucleotide sequence ID" value="NM_001310715.1"/>
</dbReference>
<dbReference type="RefSeq" id="NP_038907.1">
    <molecule id="Q9JLK7-1"/>
    <property type="nucleotide sequence ID" value="NM_013879.2"/>
</dbReference>
<dbReference type="SMR" id="Q9JLK7"/>
<dbReference type="BioGRID" id="205933">
    <property type="interactions" value="1"/>
</dbReference>
<dbReference type="CORUM" id="Q9JLK7"/>
<dbReference type="FunCoup" id="Q9JLK7">
    <property type="interactions" value="60"/>
</dbReference>
<dbReference type="STRING" id="10090.ENSMUSP00000107741"/>
<dbReference type="PhosphoSitePlus" id="Q9JLK7"/>
<dbReference type="SwissPalm" id="Q9JLK7"/>
<dbReference type="PaxDb" id="10090-ENSMUSP00000031519"/>
<dbReference type="ProteomicsDB" id="273815">
    <molecule id="Q9JLK7-1"/>
</dbReference>
<dbReference type="ProteomicsDB" id="273816">
    <molecule id="Q9JLK7-2"/>
</dbReference>
<dbReference type="Antibodypedia" id="31502">
    <property type="antibodies" value="126 antibodies from 29 providers"/>
</dbReference>
<dbReference type="DNASU" id="29867"/>
<dbReference type="Ensembl" id="ENSMUST00000031519.14">
    <molecule id="Q9JLK7-1"/>
    <property type="protein sequence ID" value="ENSMUSP00000031519.8"/>
    <property type="gene ID" value="ENSMUSG00000029544.17"/>
</dbReference>
<dbReference type="Ensembl" id="ENSMUST00000112112.2">
    <molecule id="Q9JLK7-2"/>
    <property type="protein sequence ID" value="ENSMUSP00000107740.2"/>
    <property type="gene ID" value="ENSMUSG00000029544.17"/>
</dbReference>
<dbReference type="GeneID" id="29867"/>
<dbReference type="KEGG" id="mmu:29867"/>
<dbReference type="UCSC" id="uc008zdg.1">
    <molecule id="Q9JLK7-1"/>
    <property type="organism name" value="mouse"/>
</dbReference>
<dbReference type="UCSC" id="uc008zdh.1">
    <molecule id="Q9JLK7-2"/>
    <property type="organism name" value="mouse"/>
</dbReference>
<dbReference type="AGR" id="MGI:1352750"/>
<dbReference type="CTD" id="9478"/>
<dbReference type="MGI" id="MGI:1352750">
    <property type="gene designation" value="Cabp1"/>
</dbReference>
<dbReference type="VEuPathDB" id="HostDB:ENSMUSG00000029544"/>
<dbReference type="eggNOG" id="KOG0027">
    <property type="taxonomic scope" value="Eukaryota"/>
</dbReference>
<dbReference type="GeneTree" id="ENSGT00940000158555"/>
<dbReference type="HOGENOM" id="CLU_061288_2_2_1"/>
<dbReference type="InParanoid" id="Q9JLK7"/>
<dbReference type="OMA" id="AHNCALM"/>
<dbReference type="OrthoDB" id="26525at2759"/>
<dbReference type="PhylomeDB" id="Q9JLK7"/>
<dbReference type="TreeFam" id="TF334804"/>
<dbReference type="BioGRID-ORCS" id="29867">
    <property type="hits" value="3 hits in 78 CRISPR screens"/>
</dbReference>
<dbReference type="ChiTaRS" id="Cabp1">
    <property type="organism name" value="mouse"/>
</dbReference>
<dbReference type="PRO" id="PR:Q9JLK7"/>
<dbReference type="Proteomes" id="UP000000589">
    <property type="component" value="Chromosome 5"/>
</dbReference>
<dbReference type="RNAct" id="Q9JLK7">
    <property type="molecule type" value="protein"/>
</dbReference>
<dbReference type="Bgee" id="ENSMUSG00000029544">
    <property type="expression patterns" value="Expressed in retinal neural layer and 95 other cell types or tissues"/>
</dbReference>
<dbReference type="ExpressionAtlas" id="Q9JLK7">
    <property type="expression patterns" value="baseline and differential"/>
</dbReference>
<dbReference type="GO" id="GO:0098978">
    <property type="term" value="C:glutamatergic synapse"/>
    <property type="evidence" value="ECO:0000314"/>
    <property type="project" value="SynGO"/>
</dbReference>
<dbReference type="GO" id="GO:0000139">
    <property type="term" value="C:Golgi membrane"/>
    <property type="evidence" value="ECO:0000266"/>
    <property type="project" value="MGI"/>
</dbReference>
<dbReference type="GO" id="GO:0005886">
    <property type="term" value="C:plasma membrane"/>
    <property type="evidence" value="ECO:0000266"/>
    <property type="project" value="MGI"/>
</dbReference>
<dbReference type="GO" id="GO:0005509">
    <property type="term" value="F:calcium ion binding"/>
    <property type="evidence" value="ECO:0007669"/>
    <property type="project" value="InterPro"/>
</dbReference>
<dbReference type="GO" id="GO:0048306">
    <property type="term" value="F:calcium-dependent protein binding"/>
    <property type="evidence" value="ECO:0000250"/>
    <property type="project" value="UniProtKB"/>
</dbReference>
<dbReference type="GO" id="GO:0008139">
    <property type="term" value="F:nuclear localization sequence binding"/>
    <property type="evidence" value="ECO:0000250"/>
    <property type="project" value="UniProtKB"/>
</dbReference>
<dbReference type="GO" id="GO:0098885">
    <property type="term" value="P:modification of postsynaptic actin cytoskeleton"/>
    <property type="evidence" value="ECO:0000314"/>
    <property type="project" value="SynGO"/>
</dbReference>
<dbReference type="GO" id="GO:0042308">
    <property type="term" value="P:negative regulation of protein import into nucleus"/>
    <property type="evidence" value="ECO:0000250"/>
    <property type="project" value="UniProtKB"/>
</dbReference>
<dbReference type="GO" id="GO:0007601">
    <property type="term" value="P:visual perception"/>
    <property type="evidence" value="ECO:0000315"/>
    <property type="project" value="UniProtKB"/>
</dbReference>
<dbReference type="CDD" id="cd00051">
    <property type="entry name" value="EFh"/>
    <property type="match status" value="1"/>
</dbReference>
<dbReference type="FunFam" id="1.10.238.10:FF:000069">
    <property type="entry name" value="calcium-binding protein 1 isoform X1"/>
    <property type="match status" value="1"/>
</dbReference>
<dbReference type="FunFam" id="1.10.238.10:FF:000037">
    <property type="entry name" value="calcium-binding protein 1 isoform X2"/>
    <property type="match status" value="1"/>
</dbReference>
<dbReference type="Gene3D" id="1.10.238.10">
    <property type="entry name" value="EF-hand"/>
    <property type="match status" value="2"/>
</dbReference>
<dbReference type="InterPro" id="IPR043582">
    <property type="entry name" value="CaBP1/2/4/5"/>
</dbReference>
<dbReference type="InterPro" id="IPR011992">
    <property type="entry name" value="EF-hand-dom_pair"/>
</dbReference>
<dbReference type="InterPro" id="IPR018247">
    <property type="entry name" value="EF_Hand_1_Ca_BS"/>
</dbReference>
<dbReference type="InterPro" id="IPR002048">
    <property type="entry name" value="EF_hand_dom"/>
</dbReference>
<dbReference type="PANTHER" id="PTHR45917:SF1">
    <property type="entry name" value="CALCIUM-BINDING PROTEIN 1"/>
    <property type="match status" value="1"/>
</dbReference>
<dbReference type="PANTHER" id="PTHR45917">
    <property type="entry name" value="CALCIUM-BINDING PROTEIN 1-RELATED"/>
    <property type="match status" value="1"/>
</dbReference>
<dbReference type="Pfam" id="PF13499">
    <property type="entry name" value="EF-hand_7"/>
    <property type="match status" value="2"/>
</dbReference>
<dbReference type="SMART" id="SM00054">
    <property type="entry name" value="EFh"/>
    <property type="match status" value="3"/>
</dbReference>
<dbReference type="SUPFAM" id="SSF47473">
    <property type="entry name" value="EF-hand"/>
    <property type="match status" value="1"/>
</dbReference>
<dbReference type="PROSITE" id="PS00018">
    <property type="entry name" value="EF_HAND_1"/>
    <property type="match status" value="3"/>
</dbReference>
<dbReference type="PROSITE" id="PS50222">
    <property type="entry name" value="EF_HAND_2"/>
    <property type="match status" value="4"/>
</dbReference>
<protein>
    <recommendedName>
        <fullName>Calcium-binding protein 1</fullName>
        <shortName>CaBP1</shortName>
    </recommendedName>
</protein>
<sequence>MGNCVKSPLRNLSRKMRQEEKTSYMAVQTSEDGLADGGELHGPLMMLAQNCAVMHNLLGPACIFLRKGFAENRQPDRSLRPEEIEELREAFREFDKDKDGYINCRDLGNCMRTMGYMPTEMELIELSQQINMNLGGHVDFDDFVELMGPKLLAETADMIGVKELRDAFREFDTNGDGEISTSELREAMRKLLGHQVGHRDIEEIIRDVDLNGDGRVDFEEFVRMMSR</sequence>
<comment type="function">
    <text evidence="2 5 6 9">Modulates calcium-dependent activity of inositol 1,4,5-triphosphate receptors (ITPRs). Inhibits agonist-induced intracellular calcium signaling. Enhances inactivation and does not support calcium-dependent facilitation of voltage-dependent P/Q-type calcium channels (By similarity). Causes calcium-dependent facilitation and inhibits inactivation of L-type calcium channels by binding to the same sites as calmodulin in the C-terminal domain of CACNA1C, but has an opposite effect on channel function. Suppresses the calcium-dependent inactivation of CACNA1D (PubMed:17050707, PubMed:17947313). Inhibits TRPC5 channels. Prevents NMDA receptor-induced cellular degeneration (By similarity). Required for the normal transfer of light signals through the retina (PubMed:27822497).</text>
</comment>
<comment type="subunit">
    <text evidence="2 4 5 6 7 8">Homodimer; when bound to calcium or magnesium. Interacts (via C-terminus) with ITPR1, ITPR2 and ITPR3. This binding is calcium dependent and the interaction correlates with calcium concentration. An additional calcium-independent interaction with the N-terminus of ITPR1 results in a decreased InsP(3) binding to the receptor (By similarity). Interacts with CACNA1A (via C-terminal CDB motif) in the pre- and postsynaptic membranes (By similarity). Interacts with CACNA1D and CACNA1C (via C-terminal C and IQ motifs). The binding to the C motif is calcium independent whereas the binding to IQ requires the presence of calcium and is mutually exclusive with calmodulin binding (By similarity). Interacts with TRPC5 (via C-terminus). Interacts (via EF-hands 1 and 2) at microtubules with MAP1LC3B (By similarity). Interacts with MYO1C. Interacts (via EF-hands 1 and 2) with NSMF (via the central NLS-containing motif region), the interaction occurs in a calcium dependent manner after synaptic NMDA receptor stimulation and prevents nuclear import of NSMF. Interacts with SPACA9 homolog.</text>
</comment>
<comment type="alternative products">
    <event type="alternative splicing"/>
    <isoform>
        <id>Q9JLK7-1</id>
        <name>L-CaBP1</name>
        <sequence type="displayed"/>
    </isoform>
    <isoform>
        <id>Q9JLK7-2</id>
        <name>S-CaBP1</name>
        <sequence type="described" ref="VSP_000733"/>
    </isoform>
</comment>
<comment type="tissue specificity">
    <text evidence="9">Expressed in the inner retina, specifically in amacrine cells and in cone OFF-bipolar cells (at protein level) (PubMed:27822497).</text>
</comment>
<comment type="domain">
    <text evidence="1">EF-1 binds magnesium constitutively under physiological conditions, EF-3 and EF-4 bind calcium cooperatively and EF-2 binds neither calcium nor magnesium.</text>
</comment>
<comment type="PTM">
    <text evidence="1">Phosphorylated. The phosphorylation regulates the activity (By similarity).</text>
</comment>
<comment type="disruption phenotype">
    <text evidence="9">Mice exhibit a normal retinal morphology but altered light responses of retinal ganglion cells (PubMed:27822497).</text>
</comment>
<reference key="1">
    <citation type="journal article" date="2000" name="J. Biol. Chem.">
        <title>Five members of a novel Ca(2+)-binding protein (CABP) subfamily with similarity to calmodulin.</title>
        <authorList>
            <person name="Haeseleer F."/>
            <person name="Sokal I."/>
            <person name="Verlinde C.L.M.J."/>
            <person name="Erdjument-Bromage H."/>
            <person name="Tempst P."/>
            <person name="Pronin A.N."/>
            <person name="Benovic J.L."/>
            <person name="Fariss R.N."/>
            <person name="Palczewski K."/>
        </authorList>
    </citation>
    <scope>NUCLEOTIDE SEQUENCE [MRNA] (ISOFORMS L-CABP1 AND S-CABP1)</scope>
    <source>
        <tissue>Retina</tissue>
    </source>
</reference>
<reference key="2">
    <citation type="journal article" date="2005" name="Pflugers Arch.">
        <title>Inhibition of TRPC5 channels by Ca2+-binding protein 1 in Xenopus oocytes.</title>
        <authorList>
            <person name="Kinoshita-Kawada M."/>
            <person name="Tang J."/>
            <person name="Xiao R."/>
            <person name="Kaneko S."/>
            <person name="Foskett J.K."/>
            <person name="Zhu M.X."/>
        </authorList>
    </citation>
    <scope>INTERACTION WITH TRPC5</scope>
</reference>
<reference key="3">
    <citation type="journal article" date="2006" name="J. Neurosci.">
        <title>Switching of Ca2+-dependent inactivation of Ca(v)1.3 channels by calcium binding proteins of auditory hair cells.</title>
        <authorList>
            <person name="Yang P.S."/>
            <person name="Alseikhan B.A."/>
            <person name="Hiel H."/>
            <person name="Grant L."/>
            <person name="Mori M.X."/>
            <person name="Yang W."/>
            <person name="Fuchs P.A."/>
            <person name="Yue D.T."/>
        </authorList>
    </citation>
    <scope>FUNCTION</scope>
    <scope>INTERACTION WITH CACNA1D</scope>
</reference>
<reference key="4">
    <citation type="journal article" date="2007" name="J. Physiol. (Lond.)">
        <title>Ca2+-binding proteins tune Ca2+-feedback to Cav1.3 channels in mouse auditory hair cells.</title>
        <authorList>
            <person name="Cui G."/>
            <person name="Meyer A.C."/>
            <person name="Calin-Jageman I."/>
            <person name="Neef J."/>
            <person name="Haeseleer F."/>
            <person name="Moser T."/>
            <person name="Lee A."/>
        </authorList>
    </citation>
    <scope>FUNCTION</scope>
    <scope>INTERACTION WITH CACNA1D</scope>
</reference>
<reference key="5">
    <citation type="journal article" date="2007" name="J. Muscle Res. Cell Motil.">
        <title>CIB1 and CaBP1 bind to the myo1c regulatory domain.</title>
        <authorList>
            <person name="Tang N."/>
            <person name="Lin T."/>
            <person name="Yang J."/>
            <person name="Foskett J.K."/>
            <person name="Ostap E.M."/>
        </authorList>
    </citation>
    <scope>INTERACTION WITH MYO1C</scope>
</reference>
<reference key="6">
    <citation type="journal article" date="2013" name="BMC Cell Biol.">
        <title>A mouse protein that localizes to acrosome and sperm tail is regulated by Y-chromosome.</title>
        <authorList>
            <person name="Bhattacharya R."/>
            <person name="Devi M.S."/>
            <person name="Dhople V.M."/>
            <person name="Jesudasan R.A."/>
        </authorList>
    </citation>
    <scope>INTERACTION WITH SPACA9</scope>
</reference>
<reference key="7">
    <citation type="journal article" date="2016" name="ENeuro">
        <title>Lack of CaBp1/caldendrin or cabp2 leads to altered ganglion cell responses.</title>
        <authorList>
            <person name="Sinha R."/>
            <person name="Lee A."/>
            <person name="Rieke F."/>
            <person name="Haeseleer F."/>
        </authorList>
    </citation>
    <scope>FUNCTION</scope>
    <scope>DISRUPTION PHENOTYPE</scope>
    <scope>TISSUE SPECIFICITY</scope>
</reference>
<reference key="8">
    <citation type="journal article" date="2016" name="PLoS ONE">
        <title>Expression and localization of cabp ca2+ binding proteins in the mouse cochlea.</title>
        <authorList>
            <person name="Yang T."/>
            <person name="Scholl E.S."/>
            <person name="Pan N."/>
            <person name="Fritzsch B."/>
            <person name="Haeseleer F."/>
            <person name="Lee A."/>
        </authorList>
    </citation>
    <scope>TISSUE SPECIFICITY</scope>
</reference>
<accession>Q9JLK7</accession>
<accession>Q9JLK6</accession>
<keyword id="KW-0025">Alternative splicing</keyword>
<keyword id="KW-0106">Calcium</keyword>
<keyword id="KW-0449">Lipoprotein</keyword>
<keyword id="KW-0479">Metal-binding</keyword>
<keyword id="KW-0519">Myristate</keyword>
<keyword id="KW-0564">Palmitate</keyword>
<keyword id="KW-0597">Phosphoprotein</keyword>
<keyword id="KW-1185">Reference proteome</keyword>
<keyword id="KW-0677">Repeat</keyword>
<keyword id="KW-0716">Sensory transduction</keyword>
<keyword id="KW-0844">Vision</keyword>
<evidence type="ECO:0000250" key="1"/>
<evidence type="ECO:0000250" key="2">
    <source>
        <dbReference type="UniProtKB" id="Q9NZU7"/>
    </source>
</evidence>
<evidence type="ECO:0000255" key="3">
    <source>
        <dbReference type="PROSITE-ProRule" id="PRU00448"/>
    </source>
</evidence>
<evidence type="ECO:0000269" key="4">
    <source>
    </source>
</evidence>
<evidence type="ECO:0000269" key="5">
    <source>
    </source>
</evidence>
<evidence type="ECO:0000269" key="6">
    <source>
    </source>
</evidence>
<evidence type="ECO:0000269" key="7">
    <source>
    </source>
</evidence>
<evidence type="ECO:0000269" key="8">
    <source>
    </source>
</evidence>
<evidence type="ECO:0000269" key="9">
    <source>
    </source>
</evidence>
<evidence type="ECO:0000303" key="10">
    <source>
    </source>
</evidence>
<evidence type="ECO:0000305" key="11"/>
<feature type="initiator methionine" description="Removed">
    <location>
        <position position="1"/>
    </location>
</feature>
<feature type="chain" id="PRO_0000073514" description="Calcium-binding protein 1">
    <location>
        <begin position="2"/>
        <end position="227"/>
    </location>
</feature>
<feature type="domain" description="EF-hand 1" evidence="3">
    <location>
        <begin position="82"/>
        <end position="117"/>
    </location>
</feature>
<feature type="domain" description="EF-hand 2" evidence="3">
    <location>
        <begin position="136"/>
        <end position="153"/>
    </location>
</feature>
<feature type="domain" description="EF-hand 3" evidence="3">
    <location>
        <begin position="159"/>
        <end position="194"/>
    </location>
</feature>
<feature type="domain" description="EF-hand 4" evidence="3">
    <location>
        <begin position="196"/>
        <end position="227"/>
    </location>
</feature>
<feature type="binding site" evidence="3">
    <location>
        <position position="95"/>
    </location>
    <ligand>
        <name>Ca(2+)</name>
        <dbReference type="ChEBI" id="CHEBI:29108"/>
        <label>1</label>
    </ligand>
</feature>
<feature type="binding site" evidence="3">
    <location>
        <position position="97"/>
    </location>
    <ligand>
        <name>Ca(2+)</name>
        <dbReference type="ChEBI" id="CHEBI:29108"/>
        <label>1</label>
    </ligand>
</feature>
<feature type="binding site" evidence="3">
    <location>
        <position position="99"/>
    </location>
    <ligand>
        <name>Ca(2+)</name>
        <dbReference type="ChEBI" id="CHEBI:29108"/>
        <label>1</label>
    </ligand>
</feature>
<feature type="binding site" evidence="3">
    <location>
        <position position="101"/>
    </location>
    <ligand>
        <name>Ca(2+)</name>
        <dbReference type="ChEBI" id="CHEBI:29108"/>
        <label>1</label>
    </ligand>
</feature>
<feature type="binding site" evidence="3">
    <location>
        <position position="106"/>
    </location>
    <ligand>
        <name>Ca(2+)</name>
        <dbReference type="ChEBI" id="CHEBI:29108"/>
        <label>1</label>
    </ligand>
</feature>
<feature type="binding site" evidence="3">
    <location>
        <position position="172"/>
    </location>
    <ligand>
        <name>Ca(2+)</name>
        <dbReference type="ChEBI" id="CHEBI:29108"/>
        <label>2</label>
    </ligand>
</feature>
<feature type="binding site" evidence="3">
    <location>
        <position position="174"/>
    </location>
    <ligand>
        <name>Ca(2+)</name>
        <dbReference type="ChEBI" id="CHEBI:29108"/>
        <label>2</label>
    </ligand>
</feature>
<feature type="binding site" evidence="3">
    <location>
        <position position="176"/>
    </location>
    <ligand>
        <name>Ca(2+)</name>
        <dbReference type="ChEBI" id="CHEBI:29108"/>
        <label>2</label>
    </ligand>
</feature>
<feature type="binding site" evidence="3">
    <location>
        <position position="178"/>
    </location>
    <ligand>
        <name>Ca(2+)</name>
        <dbReference type="ChEBI" id="CHEBI:29108"/>
        <label>2</label>
    </ligand>
</feature>
<feature type="binding site" evidence="3">
    <location>
        <position position="183"/>
    </location>
    <ligand>
        <name>Ca(2+)</name>
        <dbReference type="ChEBI" id="CHEBI:29108"/>
        <label>2</label>
    </ligand>
</feature>
<feature type="binding site" evidence="3">
    <location>
        <position position="209"/>
    </location>
    <ligand>
        <name>Ca(2+)</name>
        <dbReference type="ChEBI" id="CHEBI:29108"/>
        <label>3</label>
    </ligand>
</feature>
<feature type="binding site" evidence="3">
    <location>
        <position position="211"/>
    </location>
    <ligand>
        <name>Ca(2+)</name>
        <dbReference type="ChEBI" id="CHEBI:29108"/>
        <label>3</label>
    </ligand>
</feature>
<feature type="binding site" evidence="3">
    <location>
        <position position="213"/>
    </location>
    <ligand>
        <name>Ca(2+)</name>
        <dbReference type="ChEBI" id="CHEBI:29108"/>
        <label>3</label>
    </ligand>
</feature>
<feature type="binding site" evidence="3">
    <location>
        <position position="215"/>
    </location>
    <ligand>
        <name>Ca(2+)</name>
        <dbReference type="ChEBI" id="CHEBI:29108"/>
        <label>3</label>
    </ligand>
</feature>
<feature type="binding site" evidence="3">
    <location>
        <position position="220"/>
    </location>
    <ligand>
        <name>Ca(2+)</name>
        <dbReference type="ChEBI" id="CHEBI:29108"/>
        <label>3</label>
    </ligand>
</feature>
<feature type="modified residue" description="Phosphoserine" evidence="2">
    <location>
        <position position="180"/>
    </location>
</feature>
<feature type="lipid moiety-binding region" description="N-myristoyl glycine" evidence="2">
    <location>
        <position position="2"/>
    </location>
</feature>
<feature type="lipid moiety-binding region" description="S-palmitoyl cysteine" evidence="2">
    <location>
        <position position="4"/>
    </location>
</feature>
<feature type="splice variant" id="VSP_000733" description="In isoform S-CaBP1." evidence="10">
    <location>
        <begin position="16"/>
        <end position="75"/>
    </location>
</feature>
<feature type="initiator methionine" description="Removed" evidence="11">
    <location sequence="Q9JLK7-2">
        <position position="1"/>
    </location>
</feature>
<feature type="lipid moiety-binding region" description="N-myristoyl glycine" evidence="11">
    <location sequence="Q9JLK7-2">
        <position position="2"/>
    </location>
</feature>
<feature type="lipid moiety-binding region" description="S-palmitoyl cysteine" evidence="11">
    <location sequence="Q9JLK7-2">
        <position position="4"/>
    </location>
</feature>
<gene>
    <name type="primary">Cabp1</name>
</gene>
<organism>
    <name type="scientific">Mus musculus</name>
    <name type="common">Mouse</name>
    <dbReference type="NCBI Taxonomy" id="10090"/>
    <lineage>
        <taxon>Eukaryota</taxon>
        <taxon>Metazoa</taxon>
        <taxon>Chordata</taxon>
        <taxon>Craniata</taxon>
        <taxon>Vertebrata</taxon>
        <taxon>Euteleostomi</taxon>
        <taxon>Mammalia</taxon>
        <taxon>Eutheria</taxon>
        <taxon>Euarchontoglires</taxon>
        <taxon>Glires</taxon>
        <taxon>Rodentia</taxon>
        <taxon>Myomorpha</taxon>
        <taxon>Muroidea</taxon>
        <taxon>Muridae</taxon>
        <taxon>Murinae</taxon>
        <taxon>Mus</taxon>
        <taxon>Mus</taxon>
    </lineage>
</organism>